<feature type="signal peptide" evidence="6">
    <location>
        <begin position="1"/>
        <end position="19"/>
    </location>
</feature>
<feature type="chain" id="PRO_0000017507" description="Aggrecan core protein">
    <location>
        <begin position="20"/>
        <end position="2132"/>
    </location>
</feature>
<feature type="domain" description="Ig-like V-type">
    <location>
        <begin position="34"/>
        <end position="147"/>
    </location>
</feature>
<feature type="domain" description="Link 1" evidence="10">
    <location>
        <begin position="153"/>
        <end position="248"/>
    </location>
</feature>
<feature type="domain" description="Link 2" evidence="10">
    <location>
        <begin position="254"/>
        <end position="350"/>
    </location>
</feature>
<feature type="domain" description="Link 3" evidence="10">
    <location>
        <begin position="487"/>
        <end position="582"/>
    </location>
</feature>
<feature type="domain" description="Link 4" evidence="10">
    <location>
        <begin position="588"/>
        <end position="684"/>
    </location>
</feature>
<feature type="domain" description="C-type lectin" evidence="7">
    <location>
        <begin position="1918"/>
        <end position="2044"/>
    </location>
</feature>
<feature type="domain" description="Sushi" evidence="9">
    <location>
        <begin position="2047"/>
        <end position="2107"/>
    </location>
</feature>
<feature type="region of interest" description="G1-A">
    <location>
        <begin position="48"/>
        <end position="140"/>
    </location>
</feature>
<feature type="region of interest" description="G1-B">
    <location>
        <begin position="152"/>
        <end position="247"/>
    </location>
</feature>
<feature type="region of interest" description="G1-B'">
    <location>
        <begin position="253"/>
        <end position="349"/>
    </location>
</feature>
<feature type="region of interest" description="G2-B">
    <location>
        <begin position="486"/>
        <end position="580"/>
    </location>
</feature>
<feature type="region of interest" description="G2-B'">
    <location>
        <begin position="587"/>
        <end position="682"/>
    </location>
</feature>
<feature type="region of interest" description="KS">
    <location>
        <begin position="685"/>
        <end position="803"/>
    </location>
</feature>
<feature type="region of interest" description="Disordered" evidence="11">
    <location>
        <begin position="737"/>
        <end position="1079"/>
    </location>
</feature>
<feature type="region of interest" description="CS-1">
    <location>
        <begin position="805"/>
        <end position="1231"/>
    </location>
</feature>
<feature type="region of interest" description="Disordered" evidence="11">
    <location>
        <begin position="1108"/>
        <end position="1239"/>
    </location>
</feature>
<feature type="region of interest" description="CS-2">
    <location>
        <begin position="1232"/>
        <end position="1917"/>
    </location>
</feature>
<feature type="region of interest" description="Disordered" evidence="11">
    <location>
        <begin position="1299"/>
        <end position="1465"/>
    </location>
</feature>
<feature type="region of interest" description="Disordered" evidence="11">
    <location>
        <begin position="1491"/>
        <end position="1538"/>
    </location>
</feature>
<feature type="region of interest" description="Disordered" evidence="11">
    <location>
        <begin position="1586"/>
        <end position="1671"/>
    </location>
</feature>
<feature type="region of interest" description="Disordered" evidence="11">
    <location>
        <begin position="1782"/>
        <end position="1838"/>
    </location>
</feature>
<feature type="region of interest" description="Disordered" evidence="11">
    <location>
        <begin position="1861"/>
        <end position="1914"/>
    </location>
</feature>
<feature type="region of interest" description="G3">
    <location>
        <begin position="1917"/>
        <end position="2132"/>
    </location>
</feature>
<feature type="compositionally biased region" description="Low complexity" evidence="11">
    <location>
        <begin position="775"/>
        <end position="794"/>
    </location>
</feature>
<feature type="compositionally biased region" description="Low complexity" evidence="11">
    <location>
        <begin position="845"/>
        <end position="859"/>
    </location>
</feature>
<feature type="compositionally biased region" description="Low complexity" evidence="11">
    <location>
        <begin position="891"/>
        <end position="904"/>
    </location>
</feature>
<feature type="compositionally biased region" description="Low complexity" evidence="11">
    <location>
        <begin position="914"/>
        <end position="930"/>
    </location>
</feature>
<feature type="compositionally biased region" description="Low complexity" evidence="11">
    <location>
        <begin position="966"/>
        <end position="987"/>
    </location>
</feature>
<feature type="compositionally biased region" description="Polar residues" evidence="11">
    <location>
        <begin position="1332"/>
        <end position="1348"/>
    </location>
</feature>
<feature type="compositionally biased region" description="Polar residues" evidence="11">
    <location>
        <begin position="1358"/>
        <end position="1368"/>
    </location>
</feature>
<feature type="compositionally biased region" description="Polar residues" evidence="11">
    <location>
        <begin position="1376"/>
        <end position="1401"/>
    </location>
</feature>
<feature type="compositionally biased region" description="Polar residues" evidence="11">
    <location>
        <begin position="1414"/>
        <end position="1437"/>
    </location>
</feature>
<feature type="compositionally biased region" description="Low complexity" evidence="11">
    <location>
        <begin position="1455"/>
        <end position="1465"/>
    </location>
</feature>
<feature type="compositionally biased region" description="Polar residues" evidence="11">
    <location>
        <begin position="1501"/>
        <end position="1530"/>
    </location>
</feature>
<feature type="compositionally biased region" description="Polar residues" evidence="11">
    <location>
        <begin position="1620"/>
        <end position="1666"/>
    </location>
</feature>
<feature type="compositionally biased region" description="Polar residues" evidence="11">
    <location>
        <begin position="1782"/>
        <end position="1796"/>
    </location>
</feature>
<feature type="compositionally biased region" description="Low complexity" evidence="11">
    <location>
        <begin position="1808"/>
        <end position="1823"/>
    </location>
</feature>
<feature type="compositionally biased region" description="Polar residues" evidence="11">
    <location>
        <begin position="1861"/>
        <end position="1903"/>
    </location>
</feature>
<feature type="compositionally biased region" description="Low complexity" evidence="11">
    <location>
        <begin position="1904"/>
        <end position="1914"/>
    </location>
</feature>
<feature type="binding site" evidence="2">
    <location>
        <position position="1983"/>
    </location>
    <ligand>
        <name>Ca(2+)</name>
        <dbReference type="ChEBI" id="CHEBI:29108"/>
        <label>1</label>
    </ligand>
</feature>
<feature type="binding site" evidence="2">
    <location>
        <position position="1987"/>
    </location>
    <ligand>
        <name>Ca(2+)</name>
        <dbReference type="ChEBI" id="CHEBI:29108"/>
        <label>1</label>
    </ligand>
</feature>
<feature type="binding site" evidence="2">
    <location>
        <position position="2007"/>
    </location>
    <ligand>
        <name>Ca(2+)</name>
        <dbReference type="ChEBI" id="CHEBI:29108"/>
        <label>2</label>
    </ligand>
</feature>
<feature type="binding site" evidence="2">
    <location>
        <position position="2009"/>
    </location>
    <ligand>
        <name>Ca(2+)</name>
        <dbReference type="ChEBI" id="CHEBI:29108"/>
        <label>2</label>
    </ligand>
</feature>
<feature type="binding site" evidence="2">
    <location>
        <position position="2010"/>
    </location>
    <ligand>
        <name>Ca(2+)</name>
        <dbReference type="ChEBI" id="CHEBI:29108"/>
        <label>1</label>
    </ligand>
</feature>
<feature type="binding site" evidence="2">
    <location>
        <position position="2016"/>
    </location>
    <ligand>
        <name>Ca(2+)</name>
        <dbReference type="ChEBI" id="CHEBI:29108"/>
        <label>1</label>
    </ligand>
</feature>
<feature type="binding site" evidence="2">
    <location>
        <position position="2016"/>
    </location>
    <ligand>
        <name>Ca(2+)</name>
        <dbReference type="ChEBI" id="CHEBI:29108"/>
        <label>2</label>
    </ligand>
</feature>
<feature type="binding site" evidence="2">
    <location>
        <position position="2017"/>
    </location>
    <ligand>
        <name>Ca(2+)</name>
        <dbReference type="ChEBI" id="CHEBI:29108"/>
        <label>1</label>
    </ligand>
</feature>
<feature type="binding site" evidence="2">
    <location>
        <position position="2030"/>
    </location>
    <ligand>
        <name>Ca(2+)</name>
        <dbReference type="ChEBI" id="CHEBI:29108"/>
        <label>2</label>
    </ligand>
</feature>
<feature type="binding site" evidence="2">
    <location>
        <position position="2031"/>
    </location>
    <ligand>
        <name>Ca(2+)</name>
        <dbReference type="ChEBI" id="CHEBI:29108"/>
        <label>2</label>
    </ligand>
</feature>
<feature type="glycosylation site" description="N-linked (GlcNAc...) asparagine" evidence="6">
    <location>
        <position position="126"/>
    </location>
</feature>
<feature type="glycosylation site" description="N-linked (GlcNAc...) asparagine" evidence="6">
    <location>
        <position position="239"/>
    </location>
</feature>
<feature type="glycosylation site" description="N-linked (GlcNAc...) asparagine" evidence="6">
    <location>
        <position position="333"/>
    </location>
</feature>
<feature type="glycosylation site" description="O-linked (Xyl...) (keratan sulfate) threonine" evidence="1">
    <location>
        <position position="371"/>
    </location>
</feature>
<feature type="glycosylation site" description="O-linked (Xyl...) (keratan sulfate) threonine" evidence="1">
    <location>
        <position position="376"/>
    </location>
</feature>
<feature type="glycosylation site" description="N-linked (GlcNAc...) asparagine" evidence="6">
    <location>
        <position position="387"/>
    </location>
</feature>
<feature type="glycosylation site" description="N-linked (GlcNAc...) asparagine" evidence="6">
    <location>
        <position position="611"/>
    </location>
</feature>
<feature type="glycosylation site" description="N-linked (GlcNAc...) asparagine" evidence="6">
    <location>
        <position position="667"/>
    </location>
</feature>
<feature type="glycosylation site" description="O-linked (Xyl...) (chondroitin sulfate) serine" evidence="5">
    <location>
        <position position="1150"/>
    </location>
</feature>
<feature type="glycosylation site" description="O-linked (Xyl...) (chondroitin sulfate) serine" evidence="5">
    <location>
        <position position="1186"/>
    </location>
</feature>
<feature type="glycosylation site" description="O-linked (Xyl...) (chondroitin sulfate) serine" evidence="6">
    <location>
        <position position="1200"/>
    </location>
</feature>
<feature type="glycosylation site" description="O-linked (Xyl...) (chondroitin sulfate) serine" evidence="6">
    <location>
        <position position="1206"/>
    </location>
</feature>
<feature type="glycosylation site" description="O-linked (Xyl...) (chondroitin sulfate) serine" evidence="6">
    <location>
        <position position="1210"/>
    </location>
</feature>
<feature type="glycosylation site" description="O-linked (Xyl...) (chondroitin sulfate) serine" evidence="5">
    <location>
        <position position="1220"/>
    </location>
</feature>
<feature type="glycosylation site" description="O-linked (Xyl...) (chondroitin sulfate) serine" evidence="5">
    <location>
        <position position="1322"/>
    </location>
</feature>
<feature type="glycosylation site" description="N-linked (GlcNAc...) asparagine" evidence="6">
    <location>
        <position position="1675"/>
    </location>
</feature>
<feature type="glycosylation site" description="N-linked (GlcNAc...) asparagine" evidence="6">
    <location>
        <position position="1880"/>
    </location>
</feature>
<feature type="disulfide bond" evidence="8">
    <location>
        <begin position="51"/>
        <end position="133"/>
    </location>
</feature>
<feature type="disulfide bond" evidence="10">
    <location>
        <begin position="175"/>
        <end position="246"/>
    </location>
</feature>
<feature type="disulfide bond" evidence="10">
    <location>
        <begin position="199"/>
        <end position="220"/>
    </location>
</feature>
<feature type="disulfide bond" evidence="10">
    <location>
        <begin position="273"/>
        <end position="348"/>
    </location>
</feature>
<feature type="disulfide bond" evidence="10">
    <location>
        <begin position="297"/>
        <end position="318"/>
    </location>
</feature>
<feature type="disulfide bond" evidence="10">
    <location>
        <begin position="509"/>
        <end position="580"/>
    </location>
</feature>
<feature type="disulfide bond" evidence="10">
    <location>
        <begin position="533"/>
        <end position="554"/>
    </location>
</feature>
<feature type="disulfide bond" evidence="10">
    <location>
        <begin position="607"/>
        <end position="682"/>
    </location>
</feature>
<feature type="disulfide bond" evidence="10">
    <location>
        <begin position="631"/>
        <end position="652"/>
    </location>
</feature>
<feature type="disulfide bond" evidence="7">
    <location>
        <begin position="1950"/>
        <end position="2042"/>
    </location>
</feature>
<feature type="disulfide bond" evidence="7">
    <location>
        <begin position="2018"/>
        <end position="2034"/>
    </location>
</feature>
<feature type="disulfide bond" evidence="9">
    <location>
        <begin position="2049"/>
        <end position="2092"/>
    </location>
</feature>
<feature type="disulfide bond" evidence="9">
    <location>
        <begin position="2078"/>
        <end position="2105"/>
    </location>
</feature>
<feature type="sequence conflict" description="In Ref. 1; AAC37670." evidence="16" ref="1">
    <original>R</original>
    <variation>H</variation>
    <location>
        <position position="482"/>
    </location>
</feature>
<feature type="sequence conflict" description="In Ref. 1; AAC37670." evidence="16" ref="1">
    <original>V</original>
    <variation>I</variation>
    <location>
        <position position="515"/>
    </location>
</feature>
<feature type="sequence conflict" description="In Ref. 1; AAC37670." evidence="16" ref="1">
    <original>G</original>
    <variation>R</variation>
    <location>
        <position position="568"/>
    </location>
</feature>
<feature type="sequence conflict" description="In Ref. 1; AAC37670." evidence="16" ref="1">
    <original>G</original>
    <variation>E</variation>
    <location>
        <position position="696"/>
    </location>
</feature>
<feature type="sequence conflict" description="In Ref. 1; AAC37670." evidence="16" ref="1">
    <original>TP</original>
    <variation>IS</variation>
    <location>
        <begin position="1701"/>
        <end position="1702"/>
    </location>
</feature>
<feature type="sequence conflict" description="In Ref. 1; AAC37670." evidence="16" ref="1">
    <original>F</original>
    <variation>S</variation>
    <location>
        <position position="1705"/>
    </location>
</feature>
<feature type="sequence conflict" description="In Ref. 1; AAC37670." evidence="16" ref="1">
    <original>I</original>
    <variation>V</variation>
    <location>
        <position position="1729"/>
    </location>
</feature>
<feature type="sequence conflict" description="In Ref. 1; AAC37670." evidence="16" ref="1">
    <original>H</original>
    <variation>P</variation>
    <location>
        <position position="1938"/>
    </location>
</feature>
<feature type="sequence conflict" description="In Ref. 1; AAC37670." evidence="16" ref="1">
    <original>S</original>
    <variation>T</variation>
    <location>
        <position position="2119"/>
    </location>
</feature>
<sequence length="2132" mass="221941">MTTLLLVFVTLRVIAAVISEEVPDHDNSLSVSIPQPSPLKVLLGSSLTIPCYFIDPMHPVTTAPSTAPLTPRIKWSRVSKEKEVVLLVATEGQVRVNSIYQDKVSLPNYPAIPSDATLEIQNLRSNDSGIYRCEVMHGIEDSEATLEVIVKGIVFHYRAISTRYTLDFDRAQRACLQNSAIIATPEQLQAAYEDGFHQCDAGWLADQTVRYPIHTPREGCYGDKDEFPGVRTYGIRDTNETYDVYCFAEEMEGEVFYATSPEKFTFQEAANECRRLGARLATTGQLYLAWQGGMDMCSAGWLADRSVRYPISKARPNCGGNLLGVRTVYLHANQTGYPDPSSRYDAICYTGEDFVDIPENFFGVGGEDDITIQTVTWPDLELPLPRNVTEGEALGSVILTAKPIFDLSPTISEPGEALTLAPEVGSTAFPEAEERTGEATRPWGFPAEVTRGPDSATAFASEDLVVRVTISPGAAEVPGQPRLPGGVVFHYRPGSTRYSLTFEEAQQACMHTGAVIASPEQLQAAYEAGYEQCDAGWLQDQTVRYPIVSPRTPCVGDKDSSPGVRTYGVRPSSETYDVYCYVDKLEGEVFFATRLEQFTFQEARAFCAAQNATLASTGQLYAAWSQGLDKCYAGWLADGTLRYPIITPRPACGGDKPGVRTVYLYPNQTGLPDPLSKHHAFCFRGVSVAPSPGEEGGSTPTSPSDIEDWIVTQVGPGVDAVPLEPKTTEVPYFTTEPRKQTEWEPAYTPVGTSPQPGIPPTWLPTLPAAEEHTESPSASEEPSASAVPSTSEEPYTSSFAVPSMTELPGSGEASGAPDLSGDFTGSGDASGRLDSSGQPSGGIESGLPSGDLDSSGLSPTVSSGLPVESGSASGDGEVPWSHTPTVGRLPSGGESPEGSASASGTGDLSGLPSGGEITETSTSGAEETSGLPSGGDGLETSTSGVDDVSGIPTGREGLETSASGVEDLSGLPSGEEGSETSTSGIEDISVLPTGGESLETSASGVGDLSGLPSGGESLETSASGAEDVTQLPTERGGLETSASGVEDITVLPTGRESLETSASGVEDVSGLPSGREGLETSASGIEDISVFPTEAEGLDTSASGGYVSGIPSGGDGTETSASGVEDVSGLPSGGEGLETSASGVEDLGPSTRDSLETSASGVDVTGFPSGRGDPETSVSGVGDDFSGLPSGKEGLETSASGAEDLSGLPSGKEDLVGSASGALDFGKLPPGTLGSGQTPEVNGFPSGFSGEYSGADIGSGPSSGLPDFSGLPSGFPTVSLVDSTLVEVITATTSSELEGRGTIGISGSGEVSGLPLGELDSSADISGLPSGTELSGQASGSPDSSGETSGFFDVSGQPFGSSGVSEETSGIPEISGQPSGTPDTTATSGVTELNELSSGQPDVSGDGSGILFGSGQSSGITSVSGETSGISDLSGQPSGFPVFSGTATRTPDLASGTISGSGESSGITFVDTSFVEVTPTTFREEEGLGSVELSGFPSGETELSGTSGTVDVSEQSSGAIDSSGLTSPTPEFSGLPSGVAEVSGEFSGVETGSSLPSGAFDGSGLVSGFPTVSLVDRTLVESITQAPTAQEAGEGPSGILEFSGAHSGTPDISGELSGSLDLSTLQSGQMETSTETPSSPYFSGDFSSTTDVSGESIAATTGSGESSGLPEVTLNTSELVEGVTEPTVSQELGHGPSMTYTPRLFEASGDASASGDLGGAVTNFPGSGIEASVPEASSDLSAYPEAGVGVSAAPEASSKLSEFPDLHGITSAFHETDLEMTTPSTEVNSNPWTFQEGTREGSAAPEVSGESSTTSDIDTGTSGVPSATPMASGDRTEISGEWSDHTSEVNVAISSTITESEWAQPTRYPTETLQEIESPNPSYSGEETQTAETTMSLTDAPTLSSSEGSGETESTVADQEQCEEGWTKFQGHCYRHFHDRETWVDAERRCREQQSHLSSIVTPEEQEFVNKNAQDYQWIGLNDRTIEGDFRWSDGHSLQFEKWRPNQPDNFFATGEDCVVMIWHERGEWNDVPCNYQLPFTCKKGTVACGDPPVVEHARTLGQKKDRYEISSLVRYQCTEGFVQRHVPTIRCQPSGHWEEPRITCTDPNTYKHRLQKRSMRPTRRSRPSMAH</sequence>
<dbReference type="EMBL" id="L07049">
    <property type="protein sequence ID" value="AAC37670.1"/>
    <property type="molecule type" value="mRNA"/>
</dbReference>
<dbReference type="EMBL" id="AC110520">
    <property type="status" value="NOT_ANNOTATED_CDS"/>
    <property type="molecule type" value="Genomic_DNA"/>
</dbReference>
<dbReference type="EMBL" id="S73722">
    <property type="protein sequence ID" value="AAB32160.1"/>
    <property type="molecule type" value="Genomic_DNA"/>
</dbReference>
<dbReference type="EMBL" id="S73721">
    <property type="protein sequence ID" value="AAB32160.1"/>
    <property type="status" value="JOINED"/>
    <property type="molecule type" value="Genomic_DNA"/>
</dbReference>
<dbReference type="CCDS" id="CCDS21377.1"/>
<dbReference type="PIR" id="A55182">
    <property type="entry name" value="A55182"/>
</dbReference>
<dbReference type="RefSeq" id="NP_031450.2">
    <property type="nucleotide sequence ID" value="NM_007424.3"/>
</dbReference>
<dbReference type="SMR" id="Q61282"/>
<dbReference type="BioGRID" id="198020">
    <property type="interactions" value="5"/>
</dbReference>
<dbReference type="FunCoup" id="Q61282">
    <property type="interactions" value="44"/>
</dbReference>
<dbReference type="STRING" id="10090.ENSMUSP00000032835"/>
<dbReference type="GlyConnect" id="2114">
    <property type="glycosylation" value="2 N-Linked glycans (1 site)"/>
</dbReference>
<dbReference type="GlyCosmos" id="Q61282">
    <property type="glycosylation" value="9 sites, 2 glycans"/>
</dbReference>
<dbReference type="GlyGen" id="Q61282">
    <property type="glycosylation" value="16 sites, 6 N-linked glycans (4 sites)"/>
</dbReference>
<dbReference type="iPTMnet" id="Q61282"/>
<dbReference type="PhosphoSitePlus" id="Q61282"/>
<dbReference type="jPOST" id="Q61282"/>
<dbReference type="PaxDb" id="10090-ENSMUSP00000032835"/>
<dbReference type="PeptideAtlas" id="Q61282"/>
<dbReference type="ProteomicsDB" id="288181"/>
<dbReference type="Antibodypedia" id="4288">
    <property type="antibodies" value="568 antibodies from 33 providers"/>
</dbReference>
<dbReference type="DNASU" id="11595"/>
<dbReference type="Ensembl" id="ENSMUST00000032835.7">
    <property type="protein sequence ID" value="ENSMUSP00000032835.6"/>
    <property type="gene ID" value="ENSMUSG00000030607.8"/>
</dbReference>
<dbReference type="GeneID" id="11595"/>
<dbReference type="KEGG" id="mmu:11595"/>
<dbReference type="UCSC" id="uc009hxw.1">
    <property type="organism name" value="mouse"/>
</dbReference>
<dbReference type="AGR" id="MGI:99602"/>
<dbReference type="CTD" id="176"/>
<dbReference type="MGI" id="MGI:99602">
    <property type="gene designation" value="Acan"/>
</dbReference>
<dbReference type="VEuPathDB" id="HostDB:ENSMUSG00000030607"/>
<dbReference type="eggNOG" id="ENOG502QUX8">
    <property type="taxonomic scope" value="Eukaryota"/>
</dbReference>
<dbReference type="GeneTree" id="ENSGT00940000155971"/>
<dbReference type="HOGENOM" id="CLU_000303_2_0_1"/>
<dbReference type="InParanoid" id="Q61282"/>
<dbReference type="OMA" id="EDWIVTQ"/>
<dbReference type="PhylomeDB" id="Q61282"/>
<dbReference type="TreeFam" id="TF332134"/>
<dbReference type="Reactome" id="R-MMU-1474228">
    <property type="pathway name" value="Degradation of the extracellular matrix"/>
</dbReference>
<dbReference type="Reactome" id="R-MMU-2022854">
    <property type="pathway name" value="Keratan sulfate biosynthesis"/>
</dbReference>
<dbReference type="Reactome" id="R-MMU-2022857">
    <property type="pathway name" value="Keratan sulfate degradation"/>
</dbReference>
<dbReference type="Reactome" id="R-MMU-3000178">
    <property type="pathway name" value="ECM proteoglycans"/>
</dbReference>
<dbReference type="BioGRID-ORCS" id="11595">
    <property type="hits" value="2 hits in 79 CRISPR screens"/>
</dbReference>
<dbReference type="ChiTaRS" id="Acan">
    <property type="organism name" value="mouse"/>
</dbReference>
<dbReference type="PRO" id="PR:Q61282"/>
<dbReference type="Proteomes" id="UP000000589">
    <property type="component" value="Chromosome 7"/>
</dbReference>
<dbReference type="RNAct" id="Q61282">
    <property type="molecule type" value="protein"/>
</dbReference>
<dbReference type="Bgee" id="ENSMUSG00000030607">
    <property type="expression patterns" value="Expressed in humerus cartilage element and 83 other cell types or tissues"/>
</dbReference>
<dbReference type="ExpressionAtlas" id="Q61282">
    <property type="expression patterns" value="baseline and differential"/>
</dbReference>
<dbReference type="GO" id="GO:0005604">
    <property type="term" value="C:basement membrane"/>
    <property type="evidence" value="ECO:0000314"/>
    <property type="project" value="MGI"/>
</dbReference>
<dbReference type="GO" id="GO:0031012">
    <property type="term" value="C:extracellular matrix"/>
    <property type="evidence" value="ECO:0000314"/>
    <property type="project" value="MGI"/>
</dbReference>
<dbReference type="GO" id="GO:0005615">
    <property type="term" value="C:extracellular space"/>
    <property type="evidence" value="ECO:0007005"/>
    <property type="project" value="BHF-UCL"/>
</dbReference>
<dbReference type="GO" id="GO:0098982">
    <property type="term" value="C:GABA-ergic synapse"/>
    <property type="evidence" value="ECO:0000314"/>
    <property type="project" value="SynGO"/>
</dbReference>
<dbReference type="GO" id="GO:0098978">
    <property type="term" value="C:glutamatergic synapse"/>
    <property type="evidence" value="ECO:0000314"/>
    <property type="project" value="SynGO"/>
</dbReference>
<dbReference type="GO" id="GO:0098966">
    <property type="term" value="C:perisynaptic extracellular matrix"/>
    <property type="evidence" value="ECO:0000314"/>
    <property type="project" value="SynGO"/>
</dbReference>
<dbReference type="GO" id="GO:0030246">
    <property type="term" value="F:carbohydrate binding"/>
    <property type="evidence" value="ECO:0007669"/>
    <property type="project" value="UniProtKB-KW"/>
</dbReference>
<dbReference type="GO" id="GO:0005540">
    <property type="term" value="F:hyaluronic acid binding"/>
    <property type="evidence" value="ECO:0007669"/>
    <property type="project" value="InterPro"/>
</dbReference>
<dbReference type="GO" id="GO:0046872">
    <property type="term" value="F:metal ion binding"/>
    <property type="evidence" value="ECO:0007669"/>
    <property type="project" value="UniProtKB-KW"/>
</dbReference>
<dbReference type="GO" id="GO:0001502">
    <property type="term" value="P:cartilage condensation"/>
    <property type="evidence" value="ECO:0000315"/>
    <property type="project" value="MGI"/>
</dbReference>
<dbReference type="GO" id="GO:0007155">
    <property type="term" value="P:cell adhesion"/>
    <property type="evidence" value="ECO:0007669"/>
    <property type="project" value="InterPro"/>
</dbReference>
<dbReference type="GO" id="GO:0002063">
    <property type="term" value="P:chondrocyte development"/>
    <property type="evidence" value="ECO:0000315"/>
    <property type="project" value="MGI"/>
</dbReference>
<dbReference type="GO" id="GO:0030199">
    <property type="term" value="P:collagen fibril organization"/>
    <property type="evidence" value="ECO:0000315"/>
    <property type="project" value="MGI"/>
</dbReference>
<dbReference type="GO" id="GO:0007507">
    <property type="term" value="P:heart development"/>
    <property type="evidence" value="ECO:0000315"/>
    <property type="project" value="MGI"/>
</dbReference>
<dbReference type="GO" id="GO:0030166">
    <property type="term" value="P:proteoglycan biosynthetic process"/>
    <property type="evidence" value="ECO:0000315"/>
    <property type="project" value="MGI"/>
</dbReference>
<dbReference type="CDD" id="cd00033">
    <property type="entry name" value="CCP"/>
    <property type="match status" value="1"/>
</dbReference>
<dbReference type="CDD" id="cd03588">
    <property type="entry name" value="CLECT_CSPGs"/>
    <property type="match status" value="1"/>
</dbReference>
<dbReference type="CDD" id="cd05900">
    <property type="entry name" value="Ig_Aggrecan"/>
    <property type="match status" value="1"/>
</dbReference>
<dbReference type="CDD" id="cd03517">
    <property type="entry name" value="Link_domain_CSPGs_modules_1_3"/>
    <property type="match status" value="2"/>
</dbReference>
<dbReference type="CDD" id="cd03520">
    <property type="entry name" value="Link_domain_CSPGs_modules_2_4"/>
    <property type="match status" value="2"/>
</dbReference>
<dbReference type="FunFam" id="3.10.100.10:FF:000009">
    <property type="entry name" value="Aggrecan core protein"/>
    <property type="match status" value="1"/>
</dbReference>
<dbReference type="FunFam" id="3.10.100.10:FF:000011">
    <property type="entry name" value="Aggrecan core protein"/>
    <property type="match status" value="1"/>
</dbReference>
<dbReference type="FunFam" id="2.60.40.10:FF:000451">
    <property type="entry name" value="aggrecan core protein"/>
    <property type="match status" value="1"/>
</dbReference>
<dbReference type="FunFam" id="3.10.100.10:FF:000002">
    <property type="entry name" value="Hyaluronan proteoglycan link protein 1"/>
    <property type="match status" value="2"/>
</dbReference>
<dbReference type="FunFam" id="2.10.70.10:FF:000003">
    <property type="entry name" value="Versican core protein"/>
    <property type="match status" value="1"/>
</dbReference>
<dbReference type="FunFam" id="3.10.100.10:FF:000003">
    <property type="entry name" value="Versican core protein"/>
    <property type="match status" value="1"/>
</dbReference>
<dbReference type="Gene3D" id="2.10.70.10">
    <property type="entry name" value="Complement Module, domain 1"/>
    <property type="match status" value="1"/>
</dbReference>
<dbReference type="Gene3D" id="2.60.40.10">
    <property type="entry name" value="Immunoglobulins"/>
    <property type="match status" value="1"/>
</dbReference>
<dbReference type="Gene3D" id="3.10.100.10">
    <property type="entry name" value="Mannose-Binding Protein A, subunit A"/>
    <property type="match status" value="5"/>
</dbReference>
<dbReference type="InterPro" id="IPR001304">
    <property type="entry name" value="C-type_lectin-like"/>
</dbReference>
<dbReference type="InterPro" id="IPR016186">
    <property type="entry name" value="C-type_lectin-like/link_sf"/>
</dbReference>
<dbReference type="InterPro" id="IPR018378">
    <property type="entry name" value="C-type_lectin_CS"/>
</dbReference>
<dbReference type="InterPro" id="IPR033987">
    <property type="entry name" value="CSPG_CTLD"/>
</dbReference>
<dbReference type="InterPro" id="IPR016187">
    <property type="entry name" value="CTDL_fold"/>
</dbReference>
<dbReference type="InterPro" id="IPR050691">
    <property type="entry name" value="Hyaluronan_bind_Proteoglycan"/>
</dbReference>
<dbReference type="InterPro" id="IPR007110">
    <property type="entry name" value="Ig-like_dom"/>
</dbReference>
<dbReference type="InterPro" id="IPR036179">
    <property type="entry name" value="Ig-like_dom_sf"/>
</dbReference>
<dbReference type="InterPro" id="IPR013783">
    <property type="entry name" value="Ig-like_fold"/>
</dbReference>
<dbReference type="InterPro" id="IPR003006">
    <property type="entry name" value="Ig/MHC_CS"/>
</dbReference>
<dbReference type="InterPro" id="IPR003599">
    <property type="entry name" value="Ig_sub"/>
</dbReference>
<dbReference type="InterPro" id="IPR013106">
    <property type="entry name" value="Ig_V-set"/>
</dbReference>
<dbReference type="InterPro" id="IPR000538">
    <property type="entry name" value="Link_dom"/>
</dbReference>
<dbReference type="InterPro" id="IPR035976">
    <property type="entry name" value="Sushi/SCR/CCP_sf"/>
</dbReference>
<dbReference type="InterPro" id="IPR000436">
    <property type="entry name" value="Sushi_SCR_CCP_dom"/>
</dbReference>
<dbReference type="PANTHER" id="PTHR22804:SF42">
    <property type="entry name" value="AGGRECAN CORE PROTEIN"/>
    <property type="match status" value="1"/>
</dbReference>
<dbReference type="PANTHER" id="PTHR22804">
    <property type="entry name" value="AGGRECAN/VERSICAN PROTEOGLYCAN"/>
    <property type="match status" value="1"/>
</dbReference>
<dbReference type="Pfam" id="PF00059">
    <property type="entry name" value="Lectin_C"/>
    <property type="match status" value="1"/>
</dbReference>
<dbReference type="Pfam" id="PF00084">
    <property type="entry name" value="Sushi"/>
    <property type="match status" value="1"/>
</dbReference>
<dbReference type="Pfam" id="PF07686">
    <property type="entry name" value="V-set"/>
    <property type="match status" value="1"/>
</dbReference>
<dbReference type="Pfam" id="PF00193">
    <property type="entry name" value="Xlink"/>
    <property type="match status" value="4"/>
</dbReference>
<dbReference type="PRINTS" id="PR01265">
    <property type="entry name" value="LINKMODULE"/>
</dbReference>
<dbReference type="SMART" id="SM00032">
    <property type="entry name" value="CCP"/>
    <property type="match status" value="1"/>
</dbReference>
<dbReference type="SMART" id="SM00034">
    <property type="entry name" value="CLECT"/>
    <property type="match status" value="1"/>
</dbReference>
<dbReference type="SMART" id="SM00409">
    <property type="entry name" value="IG"/>
    <property type="match status" value="1"/>
</dbReference>
<dbReference type="SMART" id="SM00406">
    <property type="entry name" value="IGv"/>
    <property type="match status" value="1"/>
</dbReference>
<dbReference type="SMART" id="SM00445">
    <property type="entry name" value="LINK"/>
    <property type="match status" value="4"/>
</dbReference>
<dbReference type="SUPFAM" id="SSF56436">
    <property type="entry name" value="C-type lectin-like"/>
    <property type="match status" value="5"/>
</dbReference>
<dbReference type="SUPFAM" id="SSF57535">
    <property type="entry name" value="Complement control module/SCR domain"/>
    <property type="match status" value="1"/>
</dbReference>
<dbReference type="SUPFAM" id="SSF48726">
    <property type="entry name" value="Immunoglobulin"/>
    <property type="match status" value="1"/>
</dbReference>
<dbReference type="PROSITE" id="PS00615">
    <property type="entry name" value="C_TYPE_LECTIN_1"/>
    <property type="match status" value="1"/>
</dbReference>
<dbReference type="PROSITE" id="PS50041">
    <property type="entry name" value="C_TYPE_LECTIN_2"/>
    <property type="match status" value="1"/>
</dbReference>
<dbReference type="PROSITE" id="PS50835">
    <property type="entry name" value="IG_LIKE"/>
    <property type="match status" value="1"/>
</dbReference>
<dbReference type="PROSITE" id="PS00290">
    <property type="entry name" value="IG_MHC"/>
    <property type="match status" value="1"/>
</dbReference>
<dbReference type="PROSITE" id="PS01241">
    <property type="entry name" value="LINK_1"/>
    <property type="match status" value="4"/>
</dbReference>
<dbReference type="PROSITE" id="PS50963">
    <property type="entry name" value="LINK_2"/>
    <property type="match status" value="4"/>
</dbReference>
<dbReference type="PROSITE" id="PS50923">
    <property type="entry name" value="SUSHI"/>
    <property type="match status" value="1"/>
</dbReference>
<protein>
    <recommendedName>
        <fullName>Aggrecan core protein</fullName>
    </recommendedName>
    <alternativeName>
        <fullName>Cartilage-specific proteoglycan core protein</fullName>
        <shortName>CSPCP</shortName>
    </alternativeName>
</protein>
<gene>
    <name type="primary">Acan</name>
    <name type="synonym">Agc</name>
    <name type="synonym">Agc1</name>
</gene>
<reference key="1">
    <citation type="journal article" date="1994" name="Genomics">
        <title>Complete coding sequence, deduced primary structure, chromosomal localization, and structural analysis of murine aggrecan.</title>
        <authorList>
            <person name="Walcz E."/>
            <person name="Deak F."/>
            <person name="Erhardt P."/>
            <person name="Coulter S.N."/>
            <person name="Fueloep C."/>
            <person name="Horvath P."/>
            <person name="Doege K.J."/>
            <person name="Glant T.T."/>
        </authorList>
    </citation>
    <scope>NUCLEOTIDE SEQUENCE [MRNA]</scope>
    <source>
        <strain>BALB/cJ</strain>
        <tissue>Cartilage</tissue>
    </source>
</reference>
<reference key="2">
    <citation type="journal article" date="2009" name="PLoS Biol.">
        <title>Lineage-specific biology revealed by a finished genome assembly of the mouse.</title>
        <authorList>
            <person name="Church D.M."/>
            <person name="Goodstadt L."/>
            <person name="Hillier L.W."/>
            <person name="Zody M.C."/>
            <person name="Goldstein S."/>
            <person name="She X."/>
            <person name="Bult C.J."/>
            <person name="Agarwala R."/>
            <person name="Cherry J.L."/>
            <person name="DiCuccio M."/>
            <person name="Hlavina W."/>
            <person name="Kapustin Y."/>
            <person name="Meric P."/>
            <person name="Maglott D."/>
            <person name="Birtle Z."/>
            <person name="Marques A.C."/>
            <person name="Graves T."/>
            <person name="Zhou S."/>
            <person name="Teague B."/>
            <person name="Potamousis K."/>
            <person name="Churas C."/>
            <person name="Place M."/>
            <person name="Herschleb J."/>
            <person name="Runnheim R."/>
            <person name="Forrest D."/>
            <person name="Amos-Landgraf J."/>
            <person name="Schwartz D.C."/>
            <person name="Cheng Z."/>
            <person name="Lindblad-Toh K."/>
            <person name="Eichler E.E."/>
            <person name="Ponting C.P."/>
        </authorList>
    </citation>
    <scope>NUCLEOTIDE SEQUENCE [LARGE SCALE GENOMIC DNA]</scope>
    <source>
        <strain>C57BL/6J</strain>
    </source>
</reference>
<reference key="3">
    <citation type="journal article" date="1994" name="Nat. Genet.">
        <title>Mouse cartilage matrix deficiency (cmd) caused by a 7 bp deletion in the aggrecan gene.</title>
        <authorList>
            <person name="Watanabe H."/>
            <person name="Kimata K."/>
            <person name="Line S."/>
            <person name="Strong D."/>
            <person name="Gao L.-Y."/>
            <person name="Kozak C.A."/>
            <person name="Yamada Y."/>
        </authorList>
    </citation>
    <scope>NUCLEOTIDE SEQUENCE [GENOMIC DNA] OF 211-326</scope>
    <source>
        <strain>129/Sv</strain>
    </source>
</reference>
<reference key="4">
    <citation type="journal article" date="1999" name="J. Biol. Chem.">
        <title>Fibulin-1 is a ligand for the C-type lectin domains of aggrecan and versican.</title>
        <authorList>
            <person name="Aspberg A."/>
            <person name="Adam S."/>
            <person name="Kostka G."/>
            <person name="Timpl R."/>
            <person name="Heinegaard D."/>
        </authorList>
    </citation>
    <scope>INTERACTION WITH FBLN1</scope>
</reference>
<reference key="5">
    <citation type="journal article" date="1994" name="Biochim. Biophys. Acta">
        <title>Analysis of aggrecan and tenascin gene expression in mouse skeletal tissues by northern and in situ hybridization using species specific cDNA probes.</title>
        <authorList>
            <person name="Glumoff V."/>
            <person name="Savontaus M."/>
            <person name="Vehanen J."/>
            <person name="Vuorio E."/>
        </authorList>
    </citation>
    <scope>TISSUE SPECIFICITY</scope>
    <scope>DEVELOPMENTAL STAGE</scope>
</reference>
<reference key="6">
    <citation type="journal article" date="1999" name="Dev. Dyn.">
        <title>Mice lacking matrilin-1 (cartilage matrix protein) have alterations in type II collagen fibrillogenesis and fibril organization.</title>
        <authorList>
            <person name="Huang X."/>
            <person name="Birk D.E."/>
            <person name="Goetinck P.F."/>
        </authorList>
    </citation>
    <scope>DEVELOPMENTAL STAGE</scope>
</reference>
<reference key="7">
    <citation type="journal article" date="2010" name="Cell">
        <title>A tissue-specific atlas of mouse protein phosphorylation and expression.</title>
        <authorList>
            <person name="Huttlin E.L."/>
            <person name="Jedrychowski M.P."/>
            <person name="Elias J.E."/>
            <person name="Goswami T."/>
            <person name="Rad R."/>
            <person name="Beausoleil S.A."/>
            <person name="Villen J."/>
            <person name="Haas W."/>
            <person name="Sowa M.E."/>
            <person name="Gygi S.P."/>
        </authorList>
    </citation>
    <scope>IDENTIFICATION BY MASS SPECTROMETRY [LARGE SCALE ANALYSIS]</scope>
    <source>
        <tissue>Brain</tissue>
    </source>
</reference>
<reference key="8">
    <citation type="journal article" date="2016" name="PLoS ONE">
        <title>Deficient Mechanical Activation of Anabolic Transcripts and Post-Traumatic Cartilage Degeneration in Matrilin-1 Knockout Mice.</title>
        <authorList>
            <person name="Chen Y."/>
            <person name="Cossman J."/>
            <person name="Jayasuriya C.T."/>
            <person name="Li X."/>
            <person name="Guan Y."/>
            <person name="Fonseca V."/>
            <person name="Yang K."/>
            <person name="Charbonneau C."/>
            <person name="Yu H."/>
            <person name="Kanbe K."/>
            <person name="Ma P."/>
            <person name="Darling E."/>
            <person name="Chen Q."/>
        </authorList>
    </citation>
    <scope>DEVELOPMENTAL STAGE</scope>
    <scope>INDUCTION</scope>
</reference>
<proteinExistence type="evidence at protein level"/>
<evidence type="ECO:0000250" key="1"/>
<evidence type="ECO:0000250" key="2">
    <source>
        <dbReference type="UniProtKB" id="P07897"/>
    </source>
</evidence>
<evidence type="ECO:0000250" key="3">
    <source>
        <dbReference type="UniProtKB" id="P07898"/>
    </source>
</evidence>
<evidence type="ECO:0000250" key="4">
    <source>
        <dbReference type="UniProtKB" id="P13608"/>
    </source>
</evidence>
<evidence type="ECO:0000250" key="5">
    <source>
        <dbReference type="UniProtKB" id="P16112"/>
    </source>
</evidence>
<evidence type="ECO:0000255" key="6"/>
<evidence type="ECO:0000255" key="7">
    <source>
        <dbReference type="PROSITE-ProRule" id="PRU00040"/>
    </source>
</evidence>
<evidence type="ECO:0000255" key="8">
    <source>
        <dbReference type="PROSITE-ProRule" id="PRU00114"/>
    </source>
</evidence>
<evidence type="ECO:0000255" key="9">
    <source>
        <dbReference type="PROSITE-ProRule" id="PRU00302"/>
    </source>
</evidence>
<evidence type="ECO:0000255" key="10">
    <source>
        <dbReference type="PROSITE-ProRule" id="PRU00323"/>
    </source>
</evidence>
<evidence type="ECO:0000256" key="11">
    <source>
        <dbReference type="SAM" id="MobiDB-lite"/>
    </source>
</evidence>
<evidence type="ECO:0000269" key="12">
    <source>
    </source>
</evidence>
<evidence type="ECO:0000269" key="13">
    <source>
    </source>
</evidence>
<evidence type="ECO:0000269" key="14">
    <source>
    </source>
</evidence>
<evidence type="ECO:0000269" key="15">
    <source>
    </source>
</evidence>
<evidence type="ECO:0000305" key="16"/>
<name>PGCA_MOUSE</name>
<comment type="function">
    <text>This proteoglycan is a major component of extracellular matrix of cartilagenous tissues. A major function of this protein is to resist compression in cartilage. It binds avidly to hyaluronic acid via an N-terminal globular region. May play a regulatory role in the matrix assembly of the cartilage.</text>
</comment>
<comment type="subunit">
    <text evidence="4 5 12">Forms a complex (via covalent bonds) with MATN1; the interaction increases with age of the organism via an increase in occupancy of MATN1 binding sites (By similarity). Interacts with COMP (By similarity). Interacts with FBLN1 (PubMed:10400671).</text>
</comment>
<comment type="subcellular location">
    <subcellularLocation>
        <location evidence="3">Secreted</location>
        <location evidence="3">Extracellular space</location>
        <location evidence="3">Extracellular matrix</location>
    </subcellularLocation>
</comment>
<comment type="tissue specificity">
    <text evidence="15">Specifically expressed in cartilage tissues.</text>
</comment>
<comment type="developmental stage">
    <text evidence="13 14 15">Expressed in chondrocytes throughout the developing skeleton in a pattern very similar but not identical to those of type II and IX collagen (PubMed:7524681). Expressed in the matrix of the proximal tibial growth plates at 15 dpc (PubMed:10633862). In the newborn mouse skeleton it is expressed essentially in a mutually exclusive manner with tenascin, which is expressed in osteoblasts, periosteal and perichondrial cells, and in cells at articular surfaces (PubMed:7524681). Expressed in femoral head and rib cartilage at one week of age (PubMed:27270603).</text>
</comment>
<comment type="induction">
    <text evidence="14">Induced by mechanical load in chondocytes.</text>
</comment>
<comment type="domain">
    <text>Two globular domains, G1 and G2, comprise the N-terminus of the proteoglycan, while another globular region, G3, makes up the C-terminus. G1 contains Link domains and thus consists of three disulfide-bonded loop structures designated as the A, B, B' motifs. G2 is similar to G1. The keratan sulfate (KS) and the chondroitin sulfate (CS) attachment domains lie between G2 and G3.</text>
</comment>
<comment type="PTM">
    <text>Contains mostly chondroitin sulfate, but also keratan sulfate chains, N-linked and O-linked oligosaccharides.</text>
</comment>
<comment type="disease">
    <text>Defects in Acan are the cause of cartilage matrix deficiency (CMD). CMD is an autosomal recessive syndrome characterized by cleft palate, short limbs, tail and snout. Mutation in strain CMD causes absence of aggrecan by truncation of the protein (mutation in the G1 domain).</text>
</comment>
<comment type="similarity">
    <text evidence="16">Belongs to the aggrecan/versican proteoglycan family.</text>
</comment>
<comment type="online information" name="Functional Glycomics Gateway - Glycan Binding">
    <link uri="http://www.functionalglycomics.org/glycomics/GBPServlet?&amp;operationType=view&amp;cbpId=cbp_mou_Ctlect_283"/>
    <text>Aggrecan</text>
</comment>
<organism>
    <name type="scientific">Mus musculus</name>
    <name type="common">Mouse</name>
    <dbReference type="NCBI Taxonomy" id="10090"/>
    <lineage>
        <taxon>Eukaryota</taxon>
        <taxon>Metazoa</taxon>
        <taxon>Chordata</taxon>
        <taxon>Craniata</taxon>
        <taxon>Vertebrata</taxon>
        <taxon>Euteleostomi</taxon>
        <taxon>Mammalia</taxon>
        <taxon>Eutheria</taxon>
        <taxon>Euarchontoglires</taxon>
        <taxon>Glires</taxon>
        <taxon>Rodentia</taxon>
        <taxon>Myomorpha</taxon>
        <taxon>Muroidea</taxon>
        <taxon>Muridae</taxon>
        <taxon>Murinae</taxon>
        <taxon>Mus</taxon>
        <taxon>Mus</taxon>
    </lineage>
</organism>
<accession>Q61282</accession>
<accession>E9QLS9</accession>
<accession>Q64021</accession>
<keyword id="KW-0106">Calcium</keyword>
<keyword id="KW-1015">Disulfide bond</keyword>
<keyword id="KW-0272">Extracellular matrix</keyword>
<keyword id="KW-0325">Glycoprotein</keyword>
<keyword id="KW-0393">Immunoglobulin domain</keyword>
<keyword id="KW-0430">Lectin</keyword>
<keyword id="KW-0479">Metal-binding</keyword>
<keyword id="KW-0654">Proteoglycan</keyword>
<keyword id="KW-1185">Reference proteome</keyword>
<keyword id="KW-0677">Repeat</keyword>
<keyword id="KW-0964">Secreted</keyword>
<keyword id="KW-0732">Signal</keyword>
<keyword id="KW-0768">Sushi</keyword>